<sequence>MSAPEGLGDAHGDADRGDLSGDLRSVLVTSVLNLEPLDEDLYRGRHYWVPTSQRLFGGQIMGQALVAAAKSVSEDVHVHSLHCYFVRAGDPKVPVLYHVERIRTGASFSVRAVKAVQHGKAIFICQASFQQMQPSPLQHQFSMPSVPPPEDLLDHEALIDQYLRDPNLHKKYRVGLNRVAAQEVPIEIKVVNPPTLTQLQALEPKQMFWVRARGYIGEGDIKMHCCVAAYISDYAFLGTALLPHQSKYKVNFMASLDHSMWFHAPFRADHWMLYECESPWAGGSRGLVHGRLWRRDGVLAVTCAQEGVIRLKPQVSESKL</sequence>
<protein>
    <recommendedName>
        <fullName>Acyl-coenzyme A thioesterase 8</fullName>
        <shortName>Acyl-CoA thioesterase 8</shortName>
        <ecNumber evidence="5">3.1.2.1</ecNumber>
        <ecNumber evidence="5">3.1.2.11</ecNumber>
        <ecNumber evidence="5">3.1.2.2</ecNumber>
        <ecNumber evidence="6">3.1.2.3</ecNumber>
        <ecNumber evidence="5">3.1.2.5</ecNumber>
    </recommendedName>
    <alternativeName>
        <fullName>Choloyl-coenzyme A thioesterase</fullName>
        <ecNumber evidence="5">3.1.2.27</ecNumber>
    </alternativeName>
    <alternativeName>
        <fullName evidence="7">Peroxisomal acyl-CoA thioesterase 2</fullName>
        <shortName evidence="7">PTE-2</shortName>
    </alternativeName>
    <alternativeName>
        <fullName>Peroxisomal acyl-coenzyme A thioester hydrolase 1</fullName>
        <shortName>PTE-1</shortName>
    </alternativeName>
    <alternativeName>
        <fullName>Peroxisomal long-chain acyl-CoA thioesterase 1</fullName>
    </alternativeName>
</protein>
<reference key="1">
    <citation type="journal article" date="2002" name="J. Biol. Chem.">
        <title>Characterization of an acyl-CoA thioesterase that functions as a major regulator of peroxisomal lipid metabolism.</title>
        <authorList>
            <person name="Hunt M.C."/>
            <person name="Solaas K."/>
            <person name="Kase B.F."/>
            <person name="Alexson S.E.H."/>
        </authorList>
    </citation>
    <scope>NUCLEOTIDE SEQUENCE [MRNA]</scope>
    <scope>FUNCTION</scope>
    <scope>CATALYTIC ACTIVITY</scope>
    <scope>PATHWAY</scope>
    <scope>ACTIVITY REGULATION</scope>
    <scope>BIOPHYSICOCHEMICAL PROPERTIES</scope>
    <scope>SUBUNIT</scope>
    <scope>SUBCELLULAR LOCATION</scope>
    <scope>TISSUE SPECIFICITY</scope>
    <scope>INDUCTION</scope>
    <source>
        <strain>129/Sv</strain>
    </source>
</reference>
<reference key="2">
    <citation type="journal article" date="2004" name="Genome Res.">
        <title>The status, quality, and expansion of the NIH full-length cDNA project: the Mammalian Gene Collection (MGC).</title>
        <authorList>
            <consortium name="The MGC Project Team"/>
        </authorList>
    </citation>
    <scope>NUCLEOTIDE SEQUENCE [LARGE SCALE MRNA]</scope>
</reference>
<reference key="3">
    <citation type="journal article" date="2005" name="J. Biol. Chem.">
        <title>The identification of a succinyl-CoA thioesterase suggests a novel pathway for succinate production in peroxisomes.</title>
        <authorList>
            <person name="Westin M.A."/>
            <person name="Hunt M.C."/>
            <person name="Alexson S.E."/>
        </authorList>
    </citation>
    <scope>FUNCTION</scope>
    <scope>CATALYTIC ACTIVITY</scope>
    <scope>BIOPHYSICOCHEMICAL PROPERTIES</scope>
</reference>
<reference key="4">
    <citation type="journal article" date="2010" name="Cell">
        <title>A tissue-specific atlas of mouse protein phosphorylation and expression.</title>
        <authorList>
            <person name="Huttlin E.L."/>
            <person name="Jedrychowski M.P."/>
            <person name="Elias J.E."/>
            <person name="Goswami T."/>
            <person name="Rad R."/>
            <person name="Beausoleil S.A."/>
            <person name="Villen J."/>
            <person name="Haas W."/>
            <person name="Sowa M.E."/>
            <person name="Gygi S.P."/>
        </authorList>
    </citation>
    <scope>IDENTIFICATION BY MASS SPECTROMETRY [LARGE SCALE ANALYSIS]</scope>
    <source>
        <tissue>Heart</tissue>
        <tissue>Kidney</tissue>
        <tissue>Liver</tissue>
        <tissue>Testis</tissue>
    </source>
</reference>
<comment type="function">
    <text evidence="2 5 6">Catalyzes the hydrolysis of acyl-CoAs into free fatty acids and coenzyme A (CoASH), regulating their respective intracellular levels (PubMed:11673457). Displays no strong substrate specificity with respect to the carboxylic acid moiety of Acyl-CoAs (PubMed:11673457). Hydrolyzes medium length (C2 to C20) straight-chain, saturated and unsaturated acyl-CoAS but is inactive towards substrates with longer aliphatic chains (PubMed:11673457). Moreover, it catalyzes the hydrolysis of CoA esters of bile acids, such as choloyl-CoA and chenodeoxycholoyl-CoA and competes with bile acid CoA:amino acid N-acyltransferase (BAAT) (PubMed:11673457). Is also able to hydrolyze CoA esters of dicarboxylic acids (PubMed:16141203). It is involved in the metabolic regulation of peroxisome proliferation (By similarity).</text>
</comment>
<comment type="catalytic activity">
    <reaction evidence="5">
        <text>choloyl-CoA + H2O = cholate + CoA + H(+)</text>
        <dbReference type="Rhea" id="RHEA:14541"/>
        <dbReference type="ChEBI" id="CHEBI:15377"/>
        <dbReference type="ChEBI" id="CHEBI:15378"/>
        <dbReference type="ChEBI" id="CHEBI:29747"/>
        <dbReference type="ChEBI" id="CHEBI:57287"/>
        <dbReference type="ChEBI" id="CHEBI:57373"/>
        <dbReference type="EC" id="3.1.2.27"/>
    </reaction>
    <physiologicalReaction direction="left-to-right" evidence="9">
        <dbReference type="Rhea" id="RHEA:14542"/>
    </physiologicalReaction>
</comment>
<comment type="catalytic activity">
    <reaction evidence="5">
        <text>chenodeoxycholoyl-CoA + H2O = chenodeoxycholate + CoA + H(+)</text>
        <dbReference type="Rhea" id="RHEA:31511"/>
        <dbReference type="ChEBI" id="CHEBI:15377"/>
        <dbReference type="ChEBI" id="CHEBI:15378"/>
        <dbReference type="ChEBI" id="CHEBI:36234"/>
        <dbReference type="ChEBI" id="CHEBI:57287"/>
        <dbReference type="ChEBI" id="CHEBI:62989"/>
        <dbReference type="EC" id="3.1.2.27"/>
    </reaction>
    <physiologicalReaction direction="left-to-right" evidence="9">
        <dbReference type="Rhea" id="RHEA:31512"/>
    </physiologicalReaction>
</comment>
<comment type="catalytic activity">
    <reaction evidence="5">
        <text>acetyl-CoA + H2O = acetate + CoA + H(+)</text>
        <dbReference type="Rhea" id="RHEA:20289"/>
        <dbReference type="ChEBI" id="CHEBI:15377"/>
        <dbReference type="ChEBI" id="CHEBI:15378"/>
        <dbReference type="ChEBI" id="CHEBI:30089"/>
        <dbReference type="ChEBI" id="CHEBI:57287"/>
        <dbReference type="ChEBI" id="CHEBI:57288"/>
        <dbReference type="EC" id="3.1.2.1"/>
    </reaction>
    <physiologicalReaction direction="left-to-right" evidence="9">
        <dbReference type="Rhea" id="RHEA:20290"/>
    </physiologicalReaction>
</comment>
<comment type="catalytic activity">
    <reaction evidence="5 6">
        <text>malonyl-CoA + H2O = malonate + CoA + H(+)</text>
        <dbReference type="Rhea" id="RHEA:40219"/>
        <dbReference type="ChEBI" id="CHEBI:15377"/>
        <dbReference type="ChEBI" id="CHEBI:15378"/>
        <dbReference type="ChEBI" id="CHEBI:15792"/>
        <dbReference type="ChEBI" id="CHEBI:57287"/>
        <dbReference type="ChEBI" id="CHEBI:57384"/>
    </reaction>
    <physiologicalReaction direction="left-to-right" evidence="9">
        <dbReference type="Rhea" id="RHEA:40220"/>
    </physiologicalReaction>
</comment>
<comment type="catalytic activity">
    <reaction evidence="5">
        <text>acetoacetyl-CoA + H2O = acetoacetate + CoA + H(+)</text>
        <dbReference type="Rhea" id="RHEA:15673"/>
        <dbReference type="ChEBI" id="CHEBI:13705"/>
        <dbReference type="ChEBI" id="CHEBI:15377"/>
        <dbReference type="ChEBI" id="CHEBI:15378"/>
        <dbReference type="ChEBI" id="CHEBI:57286"/>
        <dbReference type="ChEBI" id="CHEBI:57287"/>
        <dbReference type="EC" id="3.1.2.11"/>
    </reaction>
    <physiologicalReaction direction="left-to-right" evidence="9">
        <dbReference type="Rhea" id="RHEA:15674"/>
    </physiologicalReaction>
</comment>
<comment type="catalytic activity">
    <reaction evidence="5">
        <text>propanoyl-CoA + H2O = propanoate + CoA + H(+)</text>
        <dbReference type="Rhea" id="RHEA:40103"/>
        <dbReference type="ChEBI" id="CHEBI:15377"/>
        <dbReference type="ChEBI" id="CHEBI:15378"/>
        <dbReference type="ChEBI" id="CHEBI:17272"/>
        <dbReference type="ChEBI" id="CHEBI:57287"/>
        <dbReference type="ChEBI" id="CHEBI:57392"/>
    </reaction>
    <physiologicalReaction direction="left-to-right" evidence="9">
        <dbReference type="Rhea" id="RHEA:40104"/>
    </physiologicalReaction>
</comment>
<comment type="catalytic activity">
    <reaction evidence="5">
        <text>butanoyl-CoA + H2O = butanoate + CoA + H(+)</text>
        <dbReference type="Rhea" id="RHEA:40111"/>
        <dbReference type="ChEBI" id="CHEBI:15377"/>
        <dbReference type="ChEBI" id="CHEBI:15378"/>
        <dbReference type="ChEBI" id="CHEBI:17968"/>
        <dbReference type="ChEBI" id="CHEBI:57287"/>
        <dbReference type="ChEBI" id="CHEBI:57371"/>
    </reaction>
    <physiologicalReaction direction="left-to-right" evidence="9">
        <dbReference type="Rhea" id="RHEA:40112"/>
    </physiologicalReaction>
</comment>
<comment type="catalytic activity">
    <reaction evidence="6">
        <text>succinyl-CoA + H2O = succinate + CoA + H(+)</text>
        <dbReference type="Rhea" id="RHEA:11516"/>
        <dbReference type="ChEBI" id="CHEBI:15377"/>
        <dbReference type="ChEBI" id="CHEBI:15378"/>
        <dbReference type="ChEBI" id="CHEBI:30031"/>
        <dbReference type="ChEBI" id="CHEBI:57287"/>
        <dbReference type="ChEBI" id="CHEBI:57292"/>
        <dbReference type="EC" id="3.1.2.3"/>
    </reaction>
    <physiologicalReaction direction="left-to-right" evidence="10">
        <dbReference type="Rhea" id="RHEA:11517"/>
    </physiologicalReaction>
</comment>
<comment type="catalytic activity">
    <reaction evidence="6">
        <text>glutaryl-CoA + H2O = glutarate + CoA + H(+)</text>
        <dbReference type="Rhea" id="RHEA:40575"/>
        <dbReference type="ChEBI" id="CHEBI:15377"/>
        <dbReference type="ChEBI" id="CHEBI:15378"/>
        <dbReference type="ChEBI" id="CHEBI:30921"/>
        <dbReference type="ChEBI" id="CHEBI:57287"/>
        <dbReference type="ChEBI" id="CHEBI:57378"/>
    </reaction>
    <physiologicalReaction direction="left-to-right" evidence="10">
        <dbReference type="Rhea" id="RHEA:40576"/>
    </physiologicalReaction>
</comment>
<comment type="catalytic activity">
    <reaction evidence="5">
        <text>hexanoyl-CoA + H2O = hexanoate + CoA + H(+)</text>
        <dbReference type="Rhea" id="RHEA:40115"/>
        <dbReference type="ChEBI" id="CHEBI:15377"/>
        <dbReference type="ChEBI" id="CHEBI:15378"/>
        <dbReference type="ChEBI" id="CHEBI:17120"/>
        <dbReference type="ChEBI" id="CHEBI:57287"/>
        <dbReference type="ChEBI" id="CHEBI:62620"/>
    </reaction>
    <physiologicalReaction direction="left-to-right" evidence="9">
        <dbReference type="Rhea" id="RHEA:40116"/>
    </physiologicalReaction>
</comment>
<comment type="catalytic activity">
    <reaction evidence="6">
        <text>hexanedioyl-CoA + H2O = hexanedioate + CoA + H(+)</text>
        <dbReference type="Rhea" id="RHEA:40583"/>
        <dbReference type="ChEBI" id="CHEBI:15377"/>
        <dbReference type="ChEBI" id="CHEBI:15378"/>
        <dbReference type="ChEBI" id="CHEBI:17128"/>
        <dbReference type="ChEBI" id="CHEBI:57287"/>
        <dbReference type="ChEBI" id="CHEBI:76327"/>
    </reaction>
    <physiologicalReaction direction="left-to-right" evidence="10">
        <dbReference type="Rhea" id="RHEA:40584"/>
    </physiologicalReaction>
</comment>
<comment type="catalytic activity">
    <reaction evidence="5">
        <text>octanoyl-CoA + H2O = octanoate + CoA + H(+)</text>
        <dbReference type="Rhea" id="RHEA:30143"/>
        <dbReference type="ChEBI" id="CHEBI:15377"/>
        <dbReference type="ChEBI" id="CHEBI:15378"/>
        <dbReference type="ChEBI" id="CHEBI:25646"/>
        <dbReference type="ChEBI" id="CHEBI:57287"/>
        <dbReference type="ChEBI" id="CHEBI:57386"/>
    </reaction>
    <physiologicalReaction direction="left-to-right" evidence="9">
        <dbReference type="Rhea" id="RHEA:30144"/>
    </physiologicalReaction>
</comment>
<comment type="catalytic activity">
    <reaction evidence="6">
        <text>octanedioyl-CoA + H2O = octanedioate + CoA + H(+)</text>
        <dbReference type="Rhea" id="RHEA:40587"/>
        <dbReference type="ChEBI" id="CHEBI:15377"/>
        <dbReference type="ChEBI" id="CHEBI:15378"/>
        <dbReference type="ChEBI" id="CHEBI:57287"/>
        <dbReference type="ChEBI" id="CHEBI:76282"/>
        <dbReference type="ChEBI" id="CHEBI:76317"/>
    </reaction>
    <physiologicalReaction direction="left-to-right" evidence="10">
        <dbReference type="Rhea" id="RHEA:40588"/>
    </physiologicalReaction>
</comment>
<comment type="catalytic activity">
    <reaction evidence="5">
        <text>decanoyl-CoA + H2O = decanoate + CoA + H(+)</text>
        <dbReference type="Rhea" id="RHEA:40059"/>
        <dbReference type="ChEBI" id="CHEBI:15377"/>
        <dbReference type="ChEBI" id="CHEBI:15378"/>
        <dbReference type="ChEBI" id="CHEBI:27689"/>
        <dbReference type="ChEBI" id="CHEBI:57287"/>
        <dbReference type="ChEBI" id="CHEBI:61430"/>
    </reaction>
    <physiologicalReaction direction="left-to-right" evidence="9">
        <dbReference type="Rhea" id="RHEA:40060"/>
    </physiologicalReaction>
</comment>
<comment type="catalytic activity">
    <reaction evidence="6">
        <text>decanedioyl-CoA + H2O = decanedioate + CoA + H(+)</text>
        <dbReference type="Rhea" id="RHEA:40591"/>
        <dbReference type="ChEBI" id="CHEBI:15377"/>
        <dbReference type="ChEBI" id="CHEBI:15378"/>
        <dbReference type="ChEBI" id="CHEBI:57287"/>
        <dbReference type="ChEBI" id="CHEBI:76283"/>
        <dbReference type="ChEBI" id="CHEBI:76316"/>
    </reaction>
    <physiologicalReaction direction="left-to-right" evidence="10">
        <dbReference type="Rhea" id="RHEA:40592"/>
    </physiologicalReaction>
</comment>
<comment type="catalytic activity">
    <reaction evidence="5">
        <text>dodecanoyl-CoA + H2O = dodecanoate + CoA + H(+)</text>
        <dbReference type="Rhea" id="RHEA:30135"/>
        <dbReference type="ChEBI" id="CHEBI:15377"/>
        <dbReference type="ChEBI" id="CHEBI:15378"/>
        <dbReference type="ChEBI" id="CHEBI:18262"/>
        <dbReference type="ChEBI" id="CHEBI:57287"/>
        <dbReference type="ChEBI" id="CHEBI:57375"/>
    </reaction>
    <physiologicalReaction direction="left-to-right" evidence="9">
        <dbReference type="Rhea" id="RHEA:30136"/>
    </physiologicalReaction>
</comment>
<comment type="catalytic activity">
    <reaction evidence="6">
        <text>dodecanedioyl-CoA + H2O = dodecanedioate + CoA + H(+)</text>
        <dbReference type="Rhea" id="RHEA:40595"/>
        <dbReference type="ChEBI" id="CHEBI:15377"/>
        <dbReference type="ChEBI" id="CHEBI:15378"/>
        <dbReference type="ChEBI" id="CHEBI:57287"/>
        <dbReference type="ChEBI" id="CHEBI:76273"/>
        <dbReference type="ChEBI" id="CHEBI:76315"/>
    </reaction>
    <physiologicalReaction direction="left-to-right" evidence="10">
        <dbReference type="Rhea" id="RHEA:40596"/>
    </physiologicalReaction>
</comment>
<comment type="catalytic activity">
    <reaction evidence="5">
        <text>tetradecanoyl-CoA + H2O = tetradecanoate + CoA + H(+)</text>
        <dbReference type="Rhea" id="RHEA:40119"/>
        <dbReference type="ChEBI" id="CHEBI:15377"/>
        <dbReference type="ChEBI" id="CHEBI:15378"/>
        <dbReference type="ChEBI" id="CHEBI:30807"/>
        <dbReference type="ChEBI" id="CHEBI:57287"/>
        <dbReference type="ChEBI" id="CHEBI:57385"/>
    </reaction>
    <physiologicalReaction direction="left-to-right" evidence="9">
        <dbReference type="Rhea" id="RHEA:40120"/>
    </physiologicalReaction>
</comment>
<comment type="catalytic activity">
    <reaction evidence="5">
        <text>(9Z)-tetradecenoyl-CoA + H2O = (9Z)-tetradecenoate + CoA + H(+)</text>
        <dbReference type="Rhea" id="RHEA:40135"/>
        <dbReference type="ChEBI" id="CHEBI:15377"/>
        <dbReference type="ChEBI" id="CHEBI:15378"/>
        <dbReference type="ChEBI" id="CHEBI:32370"/>
        <dbReference type="ChEBI" id="CHEBI:57287"/>
        <dbReference type="ChEBI" id="CHEBI:65060"/>
    </reaction>
    <physiologicalReaction direction="left-to-right" evidence="9">
        <dbReference type="Rhea" id="RHEA:40136"/>
    </physiologicalReaction>
</comment>
<comment type="catalytic activity">
    <reaction evidence="5">
        <text>hexadecanoyl-CoA + H2O = hexadecanoate + CoA + H(+)</text>
        <dbReference type="Rhea" id="RHEA:16645"/>
        <dbReference type="ChEBI" id="CHEBI:7896"/>
        <dbReference type="ChEBI" id="CHEBI:15377"/>
        <dbReference type="ChEBI" id="CHEBI:15378"/>
        <dbReference type="ChEBI" id="CHEBI:57287"/>
        <dbReference type="ChEBI" id="CHEBI:57379"/>
        <dbReference type="EC" id="3.1.2.2"/>
    </reaction>
    <physiologicalReaction direction="left-to-right" evidence="9">
        <dbReference type="Rhea" id="RHEA:16646"/>
    </physiologicalReaction>
</comment>
<comment type="catalytic activity">
    <reaction evidence="5">
        <text>(9Z)-hexadecenoyl-CoA + H2O = (9Z)-hexadecenoate + CoA + H(+)</text>
        <dbReference type="Rhea" id="RHEA:40131"/>
        <dbReference type="ChEBI" id="CHEBI:15377"/>
        <dbReference type="ChEBI" id="CHEBI:15378"/>
        <dbReference type="ChEBI" id="CHEBI:32372"/>
        <dbReference type="ChEBI" id="CHEBI:57287"/>
        <dbReference type="ChEBI" id="CHEBI:61540"/>
    </reaction>
    <physiologicalReaction direction="left-to-right" evidence="9">
        <dbReference type="Rhea" id="RHEA:40132"/>
    </physiologicalReaction>
</comment>
<comment type="catalytic activity">
    <reaction evidence="5">
        <text>octadecanoyl-CoA + H2O = octadecanoate + CoA + H(+)</text>
        <dbReference type="Rhea" id="RHEA:30139"/>
        <dbReference type="ChEBI" id="CHEBI:15377"/>
        <dbReference type="ChEBI" id="CHEBI:15378"/>
        <dbReference type="ChEBI" id="CHEBI:25629"/>
        <dbReference type="ChEBI" id="CHEBI:57287"/>
        <dbReference type="ChEBI" id="CHEBI:57394"/>
    </reaction>
    <physiologicalReaction direction="left-to-right" evidence="9">
        <dbReference type="Rhea" id="RHEA:30140"/>
    </physiologicalReaction>
</comment>
<comment type="catalytic activity">
    <reaction evidence="5">
        <text>(9Z)-octadecenoyl-CoA + H2O = (9Z)-octadecenoate + CoA + H(+)</text>
        <dbReference type="Rhea" id="RHEA:40139"/>
        <dbReference type="ChEBI" id="CHEBI:15377"/>
        <dbReference type="ChEBI" id="CHEBI:15378"/>
        <dbReference type="ChEBI" id="CHEBI:30823"/>
        <dbReference type="ChEBI" id="CHEBI:57287"/>
        <dbReference type="ChEBI" id="CHEBI:57387"/>
    </reaction>
    <physiologicalReaction direction="left-to-right" evidence="9">
        <dbReference type="Rhea" id="RHEA:40140"/>
    </physiologicalReaction>
</comment>
<comment type="catalytic activity">
    <reaction evidence="5">
        <text>(9Z,12Z)-octadecadienoyl-CoA + H2O = (9Z,12Z)-octadecadienoate + CoA + H(+)</text>
        <dbReference type="Rhea" id="RHEA:40143"/>
        <dbReference type="ChEBI" id="CHEBI:15377"/>
        <dbReference type="ChEBI" id="CHEBI:15378"/>
        <dbReference type="ChEBI" id="CHEBI:30245"/>
        <dbReference type="ChEBI" id="CHEBI:57287"/>
        <dbReference type="ChEBI" id="CHEBI:57383"/>
    </reaction>
    <physiologicalReaction direction="left-to-right" evidence="9">
        <dbReference type="Rhea" id="RHEA:40144"/>
    </physiologicalReaction>
</comment>
<comment type="catalytic activity">
    <reaction evidence="5">
        <text>eicosanoyl-CoA + H2O = eicosanoate + CoA + H(+)</text>
        <dbReference type="Rhea" id="RHEA:40147"/>
        <dbReference type="ChEBI" id="CHEBI:15377"/>
        <dbReference type="ChEBI" id="CHEBI:15378"/>
        <dbReference type="ChEBI" id="CHEBI:32360"/>
        <dbReference type="ChEBI" id="CHEBI:57287"/>
        <dbReference type="ChEBI" id="CHEBI:57380"/>
    </reaction>
    <physiologicalReaction direction="left-to-right" evidence="9">
        <dbReference type="Rhea" id="RHEA:40148"/>
    </physiologicalReaction>
</comment>
<comment type="catalytic activity">
    <reaction evidence="5">
        <text>(5Z,8Z,11Z,14Z)-eicosatetraenoyl-CoA + H2O = (5Z,8Z,11Z,14Z)-eicosatetraenoate + CoA + H(+)</text>
        <dbReference type="Rhea" id="RHEA:40151"/>
        <dbReference type="ChEBI" id="CHEBI:15377"/>
        <dbReference type="ChEBI" id="CHEBI:15378"/>
        <dbReference type="ChEBI" id="CHEBI:32395"/>
        <dbReference type="ChEBI" id="CHEBI:57287"/>
        <dbReference type="ChEBI" id="CHEBI:57368"/>
    </reaction>
    <physiologicalReaction direction="left-to-right" evidence="9">
        <dbReference type="Rhea" id="RHEA:40152"/>
    </physiologicalReaction>
</comment>
<comment type="catalytic activity">
    <reaction evidence="5">
        <text>4,8-dimethylnonanoyl-CoA + H2O = 4,8-dimethylnonanoate + CoA + H(+)</text>
        <dbReference type="Rhea" id="RHEA:40223"/>
        <dbReference type="ChEBI" id="CHEBI:15377"/>
        <dbReference type="ChEBI" id="CHEBI:15378"/>
        <dbReference type="ChEBI" id="CHEBI:57287"/>
        <dbReference type="ChEBI" id="CHEBI:77061"/>
        <dbReference type="ChEBI" id="CHEBI:77063"/>
    </reaction>
    <physiologicalReaction direction="left-to-right" evidence="9">
        <dbReference type="Rhea" id="RHEA:40224"/>
    </physiologicalReaction>
</comment>
<comment type="catalytic activity">
    <reaction evidence="3">
        <text>2,6-dimethylheptanoyl-CoA + H2O = 2,6-dimethylheptanoate + CoA + H(+)</text>
        <dbReference type="Rhea" id="RHEA:59952"/>
        <dbReference type="ChEBI" id="CHEBI:15377"/>
        <dbReference type="ChEBI" id="CHEBI:15378"/>
        <dbReference type="ChEBI" id="CHEBI:57287"/>
        <dbReference type="ChEBI" id="CHEBI:84847"/>
        <dbReference type="ChEBI" id="CHEBI:143533"/>
    </reaction>
    <physiologicalReaction direction="left-to-right" evidence="3">
        <dbReference type="Rhea" id="RHEA:59953"/>
    </physiologicalReaction>
</comment>
<comment type="catalytic activity">
    <reaction evidence="5">
        <text>(3S)-3-hydroxy-3-methylglutaryl-CoA + H2O = 3-hydroxy-3-methylglutarate + CoA + H(+)</text>
        <dbReference type="Rhea" id="RHEA:16305"/>
        <dbReference type="ChEBI" id="CHEBI:15377"/>
        <dbReference type="ChEBI" id="CHEBI:15378"/>
        <dbReference type="ChEBI" id="CHEBI:17325"/>
        <dbReference type="ChEBI" id="CHEBI:43074"/>
        <dbReference type="ChEBI" id="CHEBI:57287"/>
        <dbReference type="EC" id="3.1.2.5"/>
    </reaction>
    <physiologicalReaction direction="left-to-right" evidence="9">
        <dbReference type="Rhea" id="RHEA:16306"/>
    </physiologicalReaction>
</comment>
<comment type="catalytic activity">
    <reaction evidence="5">
        <text>3alpha,7alpha,12alpha-trihydroxy-5beta-cholestan-26-oyl-CoA + H2O = 3alpha,7alpha,12alpha-trihydroxy-5beta-cholestan-26-oate + CoA + H(+)</text>
        <dbReference type="Rhea" id="RHEA:59936"/>
        <dbReference type="ChEBI" id="CHEBI:15377"/>
        <dbReference type="ChEBI" id="CHEBI:15378"/>
        <dbReference type="ChEBI" id="CHEBI:57287"/>
        <dbReference type="ChEBI" id="CHEBI:63001"/>
        <dbReference type="ChEBI" id="CHEBI:85674"/>
    </reaction>
    <physiologicalReaction direction="left-to-right" evidence="9">
        <dbReference type="Rhea" id="RHEA:59937"/>
    </physiologicalReaction>
</comment>
<comment type="catalytic activity">
    <reaction evidence="5">
        <text>2-methyloctadecanoyl-CoA + H2O = 2-methyloctadecanoate + CoA + H(+)</text>
        <dbReference type="Rhea" id="RHEA:59940"/>
        <dbReference type="ChEBI" id="CHEBI:15377"/>
        <dbReference type="ChEBI" id="CHEBI:15378"/>
        <dbReference type="ChEBI" id="CHEBI:57287"/>
        <dbReference type="ChEBI" id="CHEBI:143530"/>
        <dbReference type="ChEBI" id="CHEBI:143531"/>
    </reaction>
    <physiologicalReaction direction="left-to-right" evidence="9">
        <dbReference type="Rhea" id="RHEA:59941"/>
    </physiologicalReaction>
</comment>
<comment type="catalytic activity">
    <reaction evidence="5">
        <text>prostaglandin F2alpha-CoA + H2O = prostaglandin F2alpha + CoA + H(+)</text>
        <dbReference type="Rhea" id="RHEA:59948"/>
        <dbReference type="ChEBI" id="CHEBI:15377"/>
        <dbReference type="ChEBI" id="CHEBI:15378"/>
        <dbReference type="ChEBI" id="CHEBI:57287"/>
        <dbReference type="ChEBI" id="CHEBI:57404"/>
        <dbReference type="ChEBI" id="CHEBI:143532"/>
    </reaction>
    <physiologicalReaction direction="left-to-right" evidence="9">
        <dbReference type="Rhea" id="RHEA:59949"/>
    </physiologicalReaction>
</comment>
<comment type="activity regulation">
    <text evidence="5">Inhibited by CoASH (IC(50)=10-15 uM). Also inhibited by cysteine-reactive agents.</text>
</comment>
<comment type="biophysicochemical properties">
    <kinetics>
        <KM evidence="5">29.4 uM for acetyl-CoA</KM>
        <KM evidence="5">8 uM for propionyl-CoA</KM>
        <KM evidence="5">22.6 uM for butyryl-CoA</KM>
        <KM evidence="5">23.4 uM for hexanoyl-CoA</KM>
        <KM evidence="5">6.9 uM for octanoyl-CoA</KM>
        <KM evidence="5">2.9 uM for decanoyl-CoA</KM>
        <KM evidence="5">2.8 uM for lauroyl-CoA</KM>
        <KM evidence="5">2.5 uM for myristoyl-CoA</KM>
        <KM evidence="5">3.5 uM for myristoleoyl-CoA</KM>
        <KM evidence="5">1.7 uM for palmitoyl-CoA</KM>
        <KM evidence="5">1.4 uM for palmitoleoyl-CoA</KM>
        <KM evidence="5">2.7 uM for stearoyl-CoA</KM>
        <KM evidence="5">1.6 uM for oleoyl-CoA</KM>
        <KM evidence="5">2.3 uM for linoleoyl-CoA</KM>
        <KM evidence="5">4.2 uM for arachidoyl-CoA</KM>
        <KM evidence="5">6.7 uM for arachidonoyl-CoA</KM>
        <KM evidence="5">6.3 uM for 3alpha,7alpha,12alpha-trihydroxy-5beta-cholestan-26-oyl-CoA</KM>
        <KM evidence="5">14.6 uM for choloyl-CoA</KM>
        <KM evidence="5">8.8 uM for chenodeoxycholoyl-CoA</KM>
        <KM evidence="5">5.5 uM for 4,8-dimethylnonanoyl-CoA</KM>
        <KM evidence="5">0.92 uM for prostaglandin F2alpha-CoA</KM>
        <KM evidence="5">1.9 uM for 2-methyloctadecanoyl-CoA</KM>
        <KM evidence="5">22.9 uM for (3S)-hydroxy-3-methylglutaryl-CoA</KM>
        <KM evidence="5">12.9 uM for malonyl-CoA</KM>
        <KM evidence="5">22.9 uM for acetoacetyl-CoA</KM>
        <KM evidence="6">34.7 uM for succinyl-CoA</KM>
        <KM evidence="6">15.9 uM for glutaryl-CoA</KM>
        <KM evidence="6">21.8 uM for hexanedioyl-CoA</KM>
        <KM evidence="6">19.8 uM for octanoyl-CoA</KM>
        <KM evidence="6">10.5 uM for decanedioyl-CoA</KM>
        <KM evidence="6">14.1 uM for dodecanedioyl-CoA</KM>
        <Vmax evidence="5">4.6 umol/min/mg enzyme with acetyl-CoA as substrate</Vmax>
        <Vmax evidence="5">3.45 umol/min/mg enzyme with propionyl-CoA as substrate</Vmax>
        <Vmax evidence="5">2.6 umol/min/mg enzyme with butyryl-CoA as substrate</Vmax>
        <Vmax evidence="5">5.6 umol/min/mg enzyme with hexanoyl-CoA as substrate</Vmax>
        <Vmax evidence="5">3.9 umol/min/mg enzyme with octanoyl-CoA as substrate</Vmax>
        <Vmax evidence="5">3.8 umol/min/mg enzyme with decanoyl-CoA as substrate</Vmax>
        <Vmax evidence="5">3.0 umol/min/mg enzyme with lauroyl-CoA as substrate</Vmax>
        <Vmax evidence="5">3.6 umol/min/mg enzyme with myristoyl-CoA as substrate</Vmax>
        <Vmax evidence="5">3.2 umol/min/mg enzyme with myristoleoyl-CoA as substrate</Vmax>
        <Vmax evidence="5">1.7 umol/min/mg enzyme with palmitoyl-CoA as substrate</Vmax>
        <Vmax evidence="5">2.7 umol/min/mg enzyme with palmitoleoyl-CoA as substrate</Vmax>
        <Vmax evidence="5">3.2 umol/min/mg enzyme with stearoyl-CoA as substrate</Vmax>
        <Vmax evidence="5">3.1 umol/min/mg enzyme with oleoyl-CoA as substrate</Vmax>
        <Vmax evidence="5">2.3 umol/min/mg enzyme with linoleoyl-CoA as substrate</Vmax>
        <Vmax evidence="5">2.2 umol/min/mg enzyme with arachidoyl-CoA as substrate</Vmax>
        <Vmax evidence="5">1.6 umol/min/mg enzyme with arachidonoyl-CoA as substrate</Vmax>
        <Vmax evidence="5">8.1 umol/min/mg enzyme with 3alpha,7alpha,12alpha-trihydroxy-5beta-cholestan-26-oyl-CoA as substrate</Vmax>
        <Vmax evidence="5">17.9 umol/min/mg enzyme with choloyl-CoA as substrate</Vmax>
        <Vmax evidence="5">17.1 umol/min/mg enzyme with chenodeoxycholoyl-CoA as substrate</Vmax>
        <Vmax evidence="5">10.69 umol/min/mg enzyme with 4,8-dimethylnonanoyl-CoA as substrate</Vmax>
        <Vmax evidence="5">2.25 umol/min/mg enzyme with prostaglandin F2alpha-CoA as substrate</Vmax>
        <Vmax evidence="5">1.65 umol/min/mg enzyme with 2-methyloctadecanoyl-CoA as substrate</Vmax>
        <Vmax evidence="5">2.85 umol/min/mg enzyme with (3S)-hydroxy-3-methylglutaryl-CoA as substrate</Vmax>
        <Vmax evidence="5">1.19 umol/min/mg enzyme with malonyl-CoA as substrate</Vmax>
        <Vmax evidence="5">6.0 umol/min/mg enzyme with acetoacetyl-CoA as substrate</Vmax>
        <Vmax evidence="6">0.82 umol/min/mg enzyme with succinyl-CoA as substrate</Vmax>
        <Vmax evidence="6">2.35 umol/min/mg enzyme with glutaryl-CoA as substrate</Vmax>
        <Vmax evidence="6">3.4 umol/min/mg enzyme with hexanedioyl-CoA as substrate</Vmax>
        <Vmax evidence="6">4.13 umol/min/mg enzyme with octanoyl-CoA as substrate</Vmax>
        <Vmax evidence="6">3.82 umol/min/mg enzyme with decanedioyl-CoA as substrate</Vmax>
        <Vmax evidence="6">5.03 umol/min/mg enzyme with dodecanedioyl-CoA as substrate</Vmax>
        <text evidence="5">In summary, KM for medium- to long-chain acyl CoAs is in the order 1.4-6.7 uM, and with short-chain acyl CoAs range from 8 to 30 uM. KM for bile acid-CoA esters is in the range 6-15 uM.</text>
    </kinetics>
</comment>
<comment type="pathway">
    <text evidence="9">Lipid metabolism; fatty acid metabolism.</text>
</comment>
<comment type="subunit">
    <text evidence="5">homodimer.</text>
</comment>
<comment type="subcellular location">
    <subcellularLocation>
        <location evidence="5">Peroxisome matrix</location>
    </subcellularLocation>
    <text evidence="2">Predominantly localized in the peroxisome but a localization to the cytosol cannot be excluded.</text>
</comment>
<comment type="tissue specificity">
    <text evidence="5">Ubiquitous.</text>
</comment>
<comment type="induction">
    <text evidence="5">Induced in the liver, by peroxisome proliferator or fasting via the peroxisome proliferator-activated receptors (PPARs). Diurnal regulation of its expression.</text>
</comment>
<comment type="miscellaneous">
    <text>Constitutes about 1% of total peroxisomal protein.</text>
</comment>
<comment type="similarity">
    <text evidence="8">Belongs to the C/M/P thioester hydrolase family.</text>
</comment>
<proteinExistence type="evidence at protein level"/>
<feature type="chain" id="PRO_0000202153" description="Acyl-coenzyme A thioesterase 8">
    <location>
        <begin position="1"/>
        <end position="320"/>
    </location>
</feature>
<feature type="short sequence motif" description="Microbody targeting signal" evidence="4">
    <location>
        <begin position="318"/>
        <end position="320"/>
    </location>
</feature>
<feature type="active site" description="Charge relay system" evidence="1">
    <location>
        <position position="233"/>
    </location>
</feature>
<feature type="active site" description="Charge relay system" evidence="1">
    <location>
        <position position="255"/>
    </location>
</feature>
<feature type="active site" description="Charge relay system" evidence="1">
    <location>
        <position position="305"/>
    </location>
</feature>
<feature type="sequence conflict" description="In Ref. 1; AAL35333." evidence="8" ref="1">
    <original>S</original>
    <variation>F</variation>
    <location>
        <position position="284"/>
    </location>
</feature>
<accession>P58137</accession>
<accession>Q8VHM4</accession>
<evidence type="ECO:0000250" key="1"/>
<evidence type="ECO:0000250" key="2">
    <source>
        <dbReference type="UniProtKB" id="O14734"/>
    </source>
</evidence>
<evidence type="ECO:0000250" key="3">
    <source>
        <dbReference type="UniProtKB" id="Q8VHK0"/>
    </source>
</evidence>
<evidence type="ECO:0000255" key="4"/>
<evidence type="ECO:0000269" key="5">
    <source>
    </source>
</evidence>
<evidence type="ECO:0000269" key="6">
    <source>
    </source>
</evidence>
<evidence type="ECO:0000303" key="7">
    <source>
    </source>
</evidence>
<evidence type="ECO:0000305" key="8"/>
<evidence type="ECO:0000305" key="9">
    <source>
    </source>
</evidence>
<evidence type="ECO:0000305" key="10">
    <source>
    </source>
</evidence>
<gene>
    <name type="primary">Acot8</name>
    <name type="synonym">Pte1</name>
</gene>
<keyword id="KW-0276">Fatty acid metabolism</keyword>
<keyword id="KW-0378">Hydrolase</keyword>
<keyword id="KW-0443">Lipid metabolism</keyword>
<keyword id="KW-0576">Peroxisome</keyword>
<keyword id="KW-0962">Peroxisome biogenesis</keyword>
<keyword id="KW-1185">Reference proteome</keyword>
<keyword id="KW-0719">Serine esterase</keyword>
<dbReference type="EC" id="3.1.2.1" evidence="5"/>
<dbReference type="EC" id="3.1.2.11" evidence="5"/>
<dbReference type="EC" id="3.1.2.2" evidence="5"/>
<dbReference type="EC" id="3.1.2.3" evidence="6"/>
<dbReference type="EC" id="3.1.2.5" evidence="5"/>
<dbReference type="EC" id="3.1.2.27" evidence="5"/>
<dbReference type="EMBL" id="AF441166">
    <property type="protein sequence ID" value="AAL35333.1"/>
    <property type="molecule type" value="mRNA"/>
</dbReference>
<dbReference type="EMBL" id="BC005792">
    <property type="protein sequence ID" value="AAH05792.1"/>
    <property type="molecule type" value="mRNA"/>
</dbReference>
<dbReference type="CCDS" id="CCDS17057.1"/>
<dbReference type="RefSeq" id="NP_573503.2">
    <property type="nucleotide sequence ID" value="NM_133240.2"/>
</dbReference>
<dbReference type="SMR" id="P58137"/>
<dbReference type="BioGRID" id="228440">
    <property type="interactions" value="14"/>
</dbReference>
<dbReference type="FunCoup" id="P58137">
    <property type="interactions" value="1050"/>
</dbReference>
<dbReference type="STRING" id="10090.ENSMUSP00000099383"/>
<dbReference type="SwissLipids" id="SLP:000000534"/>
<dbReference type="GlyGen" id="P58137">
    <property type="glycosylation" value="3 sites, 1 O-linked glycan (3 sites)"/>
</dbReference>
<dbReference type="iPTMnet" id="P58137"/>
<dbReference type="PhosphoSitePlus" id="P58137"/>
<dbReference type="SwissPalm" id="P58137"/>
<dbReference type="jPOST" id="P58137"/>
<dbReference type="PaxDb" id="10090-ENSMUSP00000099383"/>
<dbReference type="PeptideAtlas" id="P58137"/>
<dbReference type="ProteomicsDB" id="285654"/>
<dbReference type="Pumba" id="P58137"/>
<dbReference type="Antibodypedia" id="4138">
    <property type="antibodies" value="243 antibodies from 28 providers"/>
</dbReference>
<dbReference type="DNASU" id="170789"/>
<dbReference type="Ensembl" id="ENSMUST00000103094.11">
    <property type="protein sequence ID" value="ENSMUSP00000099383.5"/>
    <property type="gene ID" value="ENSMUSG00000017307.17"/>
</dbReference>
<dbReference type="GeneID" id="170789"/>
<dbReference type="KEGG" id="mmu:170789"/>
<dbReference type="UCSC" id="uc008nwf.2">
    <property type="organism name" value="mouse"/>
</dbReference>
<dbReference type="AGR" id="MGI:2158201"/>
<dbReference type="CTD" id="10005"/>
<dbReference type="MGI" id="MGI:2158201">
    <property type="gene designation" value="Acot8"/>
</dbReference>
<dbReference type="VEuPathDB" id="HostDB:ENSMUSG00000017307"/>
<dbReference type="eggNOG" id="KOG3016">
    <property type="taxonomic scope" value="Eukaryota"/>
</dbReference>
<dbReference type="GeneTree" id="ENSGT00390000004207"/>
<dbReference type="HOGENOM" id="CLU_032690_1_0_1"/>
<dbReference type="InParanoid" id="P58137"/>
<dbReference type="OMA" id="QVWFRTN"/>
<dbReference type="OrthoDB" id="68328at2759"/>
<dbReference type="PhylomeDB" id="P58137"/>
<dbReference type="TreeFam" id="TF315124"/>
<dbReference type="BRENDA" id="3.1.2.2">
    <property type="organism ID" value="3474"/>
</dbReference>
<dbReference type="BRENDA" id="3.1.2.20">
    <property type="organism ID" value="3474"/>
</dbReference>
<dbReference type="BRENDA" id="3.1.2.27">
    <property type="organism ID" value="3474"/>
</dbReference>
<dbReference type="Reactome" id="R-MMU-193368">
    <property type="pathway name" value="Synthesis of bile acids and bile salts via 7alpha-hydroxycholesterol"/>
</dbReference>
<dbReference type="Reactome" id="R-MMU-2046106">
    <property type="pathway name" value="alpha-linolenic acid (ALA) metabolism"/>
</dbReference>
<dbReference type="Reactome" id="R-MMU-389887">
    <property type="pathway name" value="Beta-oxidation of pristanoyl-CoA"/>
</dbReference>
<dbReference type="Reactome" id="R-MMU-390247">
    <property type="pathway name" value="Beta-oxidation of very long chain fatty acids"/>
</dbReference>
<dbReference type="Reactome" id="R-MMU-9033241">
    <property type="pathway name" value="Peroxisomal protein import"/>
</dbReference>
<dbReference type="UniPathway" id="UPA00199"/>
<dbReference type="BioGRID-ORCS" id="170789">
    <property type="hits" value="2 hits in 80 CRISPR screens"/>
</dbReference>
<dbReference type="CD-CODE" id="CE726F99">
    <property type="entry name" value="Postsynaptic density"/>
</dbReference>
<dbReference type="ChiTaRS" id="Acot8">
    <property type="organism name" value="mouse"/>
</dbReference>
<dbReference type="PRO" id="PR:P58137"/>
<dbReference type="Proteomes" id="UP000000589">
    <property type="component" value="Chromosome 2"/>
</dbReference>
<dbReference type="RNAct" id="P58137">
    <property type="molecule type" value="protein"/>
</dbReference>
<dbReference type="Bgee" id="ENSMUSG00000017307">
    <property type="expression patterns" value="Expressed in spermatid and 253 other cell types or tissues"/>
</dbReference>
<dbReference type="ExpressionAtlas" id="P58137">
    <property type="expression patterns" value="baseline and differential"/>
</dbReference>
<dbReference type="GO" id="GO:0005739">
    <property type="term" value="C:mitochondrion"/>
    <property type="evidence" value="ECO:0007005"/>
    <property type="project" value="MGI"/>
</dbReference>
<dbReference type="GO" id="GO:0005782">
    <property type="term" value="C:peroxisomal matrix"/>
    <property type="evidence" value="ECO:0000314"/>
    <property type="project" value="MGI"/>
</dbReference>
<dbReference type="GO" id="GO:0005777">
    <property type="term" value="C:peroxisome"/>
    <property type="evidence" value="ECO:0000314"/>
    <property type="project" value="HGNC-UCL"/>
</dbReference>
<dbReference type="GO" id="GO:0047603">
    <property type="term" value="F:acetoacetyl-CoA hydrolase activity"/>
    <property type="evidence" value="ECO:0007669"/>
    <property type="project" value="UniProtKB-EC"/>
</dbReference>
<dbReference type="GO" id="GO:0003986">
    <property type="term" value="F:acetyl-CoA hydrolase activity"/>
    <property type="evidence" value="ECO:0007669"/>
    <property type="project" value="UniProtKB-EC"/>
</dbReference>
<dbReference type="GO" id="GO:0052689">
    <property type="term" value="F:carboxylic ester hydrolase activity"/>
    <property type="evidence" value="ECO:0007669"/>
    <property type="project" value="UniProtKB-KW"/>
</dbReference>
<dbReference type="GO" id="GO:0033882">
    <property type="term" value="F:choloyl-CoA hydrolase activity"/>
    <property type="evidence" value="ECO:0007669"/>
    <property type="project" value="UniProtKB-EC"/>
</dbReference>
<dbReference type="GO" id="GO:0047617">
    <property type="term" value="F:fatty acyl-CoA hydrolase activity"/>
    <property type="evidence" value="ECO:0000314"/>
    <property type="project" value="MGI"/>
</dbReference>
<dbReference type="GO" id="GO:0047994">
    <property type="term" value="F:hydroxymethylglutaryl-CoA hydrolase activity"/>
    <property type="evidence" value="ECO:0007669"/>
    <property type="project" value="UniProtKB-EC"/>
</dbReference>
<dbReference type="GO" id="GO:0052816">
    <property type="term" value="F:long-chain fatty acyl-CoA hydrolase activity"/>
    <property type="evidence" value="ECO:0000314"/>
    <property type="project" value="MGI"/>
</dbReference>
<dbReference type="GO" id="GO:0052815">
    <property type="term" value="F:medium-chain fatty acyl-CoA hydrolase activity"/>
    <property type="evidence" value="ECO:0000250"/>
    <property type="project" value="UniProtKB"/>
</dbReference>
<dbReference type="GO" id="GO:0004778">
    <property type="term" value="F:succinyl-CoA hydrolase activity"/>
    <property type="evidence" value="ECO:0007669"/>
    <property type="project" value="UniProtKB-EC"/>
</dbReference>
<dbReference type="GO" id="GO:0006637">
    <property type="term" value="P:acyl-CoA metabolic process"/>
    <property type="evidence" value="ECO:0000314"/>
    <property type="project" value="MGI"/>
</dbReference>
<dbReference type="GO" id="GO:0036109">
    <property type="term" value="P:alpha-linolenic acid metabolic process"/>
    <property type="evidence" value="ECO:0000314"/>
    <property type="project" value="MGI"/>
</dbReference>
<dbReference type="GO" id="GO:0043649">
    <property type="term" value="P:dicarboxylic acid catabolic process"/>
    <property type="evidence" value="ECO:0007669"/>
    <property type="project" value="Ensembl"/>
</dbReference>
<dbReference type="GO" id="GO:1901570">
    <property type="term" value="P:fatty acid derivative biosynthetic process"/>
    <property type="evidence" value="ECO:0000314"/>
    <property type="project" value="MGI"/>
</dbReference>
<dbReference type="GO" id="GO:0042759">
    <property type="term" value="P:long-chain fatty acid biosynthetic process"/>
    <property type="evidence" value="ECO:0000314"/>
    <property type="project" value="MGI"/>
</dbReference>
<dbReference type="GO" id="GO:0010561">
    <property type="term" value="P:negative regulation of glycoprotein biosynthetic process"/>
    <property type="evidence" value="ECO:0000250"/>
    <property type="project" value="UniProtKB"/>
</dbReference>
<dbReference type="GO" id="GO:0016559">
    <property type="term" value="P:peroxisome fission"/>
    <property type="evidence" value="ECO:0007669"/>
    <property type="project" value="Ensembl"/>
</dbReference>
<dbReference type="GO" id="GO:0006636">
    <property type="term" value="P:unsaturated fatty acid biosynthetic process"/>
    <property type="evidence" value="ECO:0000314"/>
    <property type="project" value="MGI"/>
</dbReference>
<dbReference type="CDD" id="cd03444">
    <property type="entry name" value="Thioesterase_II_repeat1"/>
    <property type="match status" value="1"/>
</dbReference>
<dbReference type="CDD" id="cd03445">
    <property type="entry name" value="Thioesterase_II_repeat2"/>
    <property type="match status" value="1"/>
</dbReference>
<dbReference type="FunFam" id="2.40.160.210:FF:000002">
    <property type="entry name" value="acyl-coenzyme A thioesterase 8"/>
    <property type="match status" value="1"/>
</dbReference>
<dbReference type="Gene3D" id="2.40.160.210">
    <property type="entry name" value="Acyl-CoA thioesterase, double hotdog domain"/>
    <property type="match status" value="1"/>
</dbReference>
<dbReference type="InterPro" id="IPR049450">
    <property type="entry name" value="ACOT8-like_C"/>
</dbReference>
<dbReference type="InterPro" id="IPR042171">
    <property type="entry name" value="Acyl-CoA_hotdog"/>
</dbReference>
<dbReference type="InterPro" id="IPR003703">
    <property type="entry name" value="Acyl_CoA_thio"/>
</dbReference>
<dbReference type="InterPro" id="IPR029069">
    <property type="entry name" value="HotDog_dom_sf"/>
</dbReference>
<dbReference type="InterPro" id="IPR049449">
    <property type="entry name" value="TesB_ACOT8-like_N"/>
</dbReference>
<dbReference type="NCBIfam" id="TIGR00189">
    <property type="entry name" value="tesB"/>
    <property type="match status" value="1"/>
</dbReference>
<dbReference type="PANTHER" id="PTHR11066">
    <property type="entry name" value="ACYL-COA THIOESTERASE"/>
    <property type="match status" value="1"/>
</dbReference>
<dbReference type="PANTHER" id="PTHR11066:SF34">
    <property type="entry name" value="ACYL-COENZYME A THIOESTERASE 8"/>
    <property type="match status" value="1"/>
</dbReference>
<dbReference type="Pfam" id="PF13622">
    <property type="entry name" value="4HBT_3"/>
    <property type="match status" value="1"/>
</dbReference>
<dbReference type="Pfam" id="PF20789">
    <property type="entry name" value="4HBT_3C"/>
    <property type="match status" value="1"/>
</dbReference>
<dbReference type="SUPFAM" id="SSF54637">
    <property type="entry name" value="Thioesterase/thiol ester dehydrase-isomerase"/>
    <property type="match status" value="2"/>
</dbReference>
<organism>
    <name type="scientific">Mus musculus</name>
    <name type="common">Mouse</name>
    <dbReference type="NCBI Taxonomy" id="10090"/>
    <lineage>
        <taxon>Eukaryota</taxon>
        <taxon>Metazoa</taxon>
        <taxon>Chordata</taxon>
        <taxon>Craniata</taxon>
        <taxon>Vertebrata</taxon>
        <taxon>Euteleostomi</taxon>
        <taxon>Mammalia</taxon>
        <taxon>Eutheria</taxon>
        <taxon>Euarchontoglires</taxon>
        <taxon>Glires</taxon>
        <taxon>Rodentia</taxon>
        <taxon>Myomorpha</taxon>
        <taxon>Muroidea</taxon>
        <taxon>Muridae</taxon>
        <taxon>Murinae</taxon>
        <taxon>Mus</taxon>
        <taxon>Mus</taxon>
    </lineage>
</organism>
<name>ACOT8_MOUSE</name>